<gene>
    <name type="ordered locus">P9301_01411</name>
</gene>
<proteinExistence type="inferred from homology"/>
<accession>A3PAI9</accession>
<keyword id="KW-1185">Reference proteome</keyword>
<name>Y141_PROM0</name>
<protein>
    <recommendedName>
        <fullName evidence="1">UPF0367 protein P9301_01411</fullName>
    </recommendedName>
</protein>
<reference key="1">
    <citation type="journal article" date="2007" name="PLoS Genet.">
        <title>Patterns and implications of gene gain and loss in the evolution of Prochlorococcus.</title>
        <authorList>
            <person name="Kettler G.C."/>
            <person name="Martiny A.C."/>
            <person name="Huang K."/>
            <person name="Zucker J."/>
            <person name="Coleman M.L."/>
            <person name="Rodrigue S."/>
            <person name="Chen F."/>
            <person name="Lapidus A."/>
            <person name="Ferriera S."/>
            <person name="Johnson J."/>
            <person name="Steglich C."/>
            <person name="Church G.M."/>
            <person name="Richardson P."/>
            <person name="Chisholm S.W."/>
        </authorList>
    </citation>
    <scope>NUCLEOTIDE SEQUENCE [LARGE SCALE GENOMIC DNA]</scope>
    <source>
        <strain>MIT 9301</strain>
    </source>
</reference>
<comment type="similarity">
    <text evidence="1">Belongs to the UPF0367 family.</text>
</comment>
<sequence length="90" mass="10248">MYSLELSLRYSPFPLSIQKKEFDDVKRIYDEIKTAMNETLESSNLIELSCDKVQDKLITVRAKEIISVQIYEKSSVAGGAKRPGFSLDID</sequence>
<feature type="chain" id="PRO_1000067773" description="UPF0367 protein P9301_01411">
    <location>
        <begin position="1"/>
        <end position="90"/>
    </location>
</feature>
<organism>
    <name type="scientific">Prochlorococcus marinus (strain MIT 9301)</name>
    <dbReference type="NCBI Taxonomy" id="167546"/>
    <lineage>
        <taxon>Bacteria</taxon>
        <taxon>Bacillati</taxon>
        <taxon>Cyanobacteriota</taxon>
        <taxon>Cyanophyceae</taxon>
        <taxon>Synechococcales</taxon>
        <taxon>Prochlorococcaceae</taxon>
        <taxon>Prochlorococcus</taxon>
    </lineage>
</organism>
<dbReference type="EMBL" id="CP000576">
    <property type="protein sequence ID" value="ABO16764.1"/>
    <property type="molecule type" value="Genomic_DNA"/>
</dbReference>
<dbReference type="RefSeq" id="WP_011862167.1">
    <property type="nucleotide sequence ID" value="NC_009091.1"/>
</dbReference>
<dbReference type="SMR" id="A3PAI9"/>
<dbReference type="STRING" id="167546.P9301_01411"/>
<dbReference type="KEGG" id="pmg:P9301_01411"/>
<dbReference type="eggNOG" id="ENOG5032YB3">
    <property type="taxonomic scope" value="Bacteria"/>
</dbReference>
<dbReference type="HOGENOM" id="CLU_180777_1_0_3"/>
<dbReference type="OrthoDB" id="516864at2"/>
<dbReference type="Proteomes" id="UP000001430">
    <property type="component" value="Chromosome"/>
</dbReference>
<dbReference type="HAMAP" id="MF_01360">
    <property type="entry name" value="UPF0367"/>
    <property type="match status" value="1"/>
</dbReference>
<dbReference type="InterPro" id="IPR020885">
    <property type="entry name" value="UPF0367"/>
</dbReference>
<dbReference type="NCBIfam" id="NF010236">
    <property type="entry name" value="PRK13683.1"/>
    <property type="match status" value="1"/>
</dbReference>
<evidence type="ECO:0000255" key="1">
    <source>
        <dbReference type="HAMAP-Rule" id="MF_01360"/>
    </source>
</evidence>